<proteinExistence type="inferred from homology"/>
<sequence length="543" mass="62296">MAPVPIYVKGGIWTNLEDQILKAAVQKYGTHAWSKVASLLQKKNARQCQSRWNEFLNPSLNFKPFSQQEDDKLLDLAKRIPNQWKSIGEMMGRPAQTCIDRYNILLAIDKDDLELAATTGVQIGEINPNNESLPAKADKDELLDEEREMLAEARARLLNTQGKKATRKIRERMLEESKRVAFLQKRRELKQAGVDSKIKAPRKKYSSQMDYNEDIAYEQQPLPGIYDTSKEDEQTEKLLKSFEKLVERKGLLDRKSDEKKTIPQKRRQGEQITSSVTKLDSVLTDEYKKPKLELTPATLKGSKRKINKTTSILHLFESLPSPKNDFEIVLDDLDEEMESTDAFNTESSYVNGKYPLEALISSTEHQSENKAMEIMEYIPTVFQIKTELQVPSPIVDPKNEIDRELNRIISAKENGNPIYNSTEVNNYLEEIINSASTTEVPSTVLHPKLETSLKTITPATEHELLGMERKVHELRTALEDSVKSHREAVSQLSQDFEEKLHPTVSGLAYQYYTDYMKYRNDHKTMQEETQSLAEQIKLAQRSQ</sequence>
<protein>
    <recommendedName>
        <fullName>Pre-mRNA-splicing factor CEF1</fullName>
    </recommendedName>
</protein>
<feature type="chain" id="PRO_0000197101" description="Pre-mRNA-splicing factor CEF1">
    <location>
        <begin position="1"/>
        <end position="543"/>
    </location>
</feature>
<feature type="domain" description="HTH myb-type" evidence="3">
    <location>
        <begin position="1"/>
        <end position="58"/>
    </location>
</feature>
<feature type="domain" description="Myb-like">
    <location>
        <begin position="59"/>
        <end position="106"/>
    </location>
</feature>
<feature type="DNA-binding region" description="H-T-H motif" evidence="3">
    <location>
        <begin position="33"/>
        <end position="56"/>
    </location>
</feature>
<feature type="region of interest" description="Disordered" evidence="4">
    <location>
        <begin position="256"/>
        <end position="275"/>
    </location>
</feature>
<feature type="coiled-coil region" evidence="2">
    <location>
        <begin position="135"/>
        <end position="188"/>
    </location>
</feature>
<feature type="coiled-coil region" evidence="2">
    <location>
        <begin position="459"/>
        <end position="541"/>
    </location>
</feature>
<gene>
    <name type="primary">CEF1</name>
    <name type="ordered locus">KLLA0C07304g</name>
</gene>
<comment type="function">
    <text evidence="1">Involved in pre-mRNA splicing and cell cycle control.</text>
</comment>
<comment type="subunit">
    <text evidence="1">Associated with the spliceosome.</text>
</comment>
<comment type="subcellular location">
    <subcellularLocation>
        <location evidence="1">Cytoplasm</location>
    </subcellularLocation>
    <subcellularLocation>
        <location evidence="3">Nucleus</location>
    </subcellularLocation>
</comment>
<comment type="similarity">
    <text evidence="5">Belongs to the CEF1 family.</text>
</comment>
<organism>
    <name type="scientific">Kluyveromyces lactis (strain ATCC 8585 / CBS 2359 / DSM 70799 / NBRC 1267 / NRRL Y-1140 / WM37)</name>
    <name type="common">Yeast</name>
    <name type="synonym">Candida sphaerica</name>
    <dbReference type="NCBI Taxonomy" id="284590"/>
    <lineage>
        <taxon>Eukaryota</taxon>
        <taxon>Fungi</taxon>
        <taxon>Dikarya</taxon>
        <taxon>Ascomycota</taxon>
        <taxon>Saccharomycotina</taxon>
        <taxon>Saccharomycetes</taxon>
        <taxon>Saccharomycetales</taxon>
        <taxon>Saccharomycetaceae</taxon>
        <taxon>Kluyveromyces</taxon>
    </lineage>
</organism>
<name>CEF1_KLULA</name>
<accession>Q6CU65</accession>
<evidence type="ECO:0000250" key="1"/>
<evidence type="ECO:0000255" key="2"/>
<evidence type="ECO:0000255" key="3">
    <source>
        <dbReference type="PROSITE-ProRule" id="PRU00625"/>
    </source>
</evidence>
<evidence type="ECO:0000256" key="4">
    <source>
        <dbReference type="SAM" id="MobiDB-lite"/>
    </source>
</evidence>
<evidence type="ECO:0000305" key="5"/>
<keyword id="KW-0175">Coiled coil</keyword>
<keyword id="KW-0963">Cytoplasm</keyword>
<keyword id="KW-0238">DNA-binding</keyword>
<keyword id="KW-0507">mRNA processing</keyword>
<keyword id="KW-0508">mRNA splicing</keyword>
<keyword id="KW-0539">Nucleus</keyword>
<keyword id="KW-1185">Reference proteome</keyword>
<keyword id="KW-0677">Repeat</keyword>
<keyword id="KW-0747">Spliceosome</keyword>
<dbReference type="EMBL" id="CR382123">
    <property type="protein sequence ID" value="CAH01375.1"/>
    <property type="molecule type" value="Genomic_DNA"/>
</dbReference>
<dbReference type="RefSeq" id="XP_452524.1">
    <property type="nucleotide sequence ID" value="XM_452524.1"/>
</dbReference>
<dbReference type="SMR" id="Q6CU65"/>
<dbReference type="FunCoup" id="Q6CU65">
    <property type="interactions" value="158"/>
</dbReference>
<dbReference type="STRING" id="284590.Q6CU65"/>
<dbReference type="PaxDb" id="284590-Q6CU65"/>
<dbReference type="KEGG" id="kla:KLLA0_C07304g"/>
<dbReference type="eggNOG" id="KOG0050">
    <property type="taxonomic scope" value="Eukaryota"/>
</dbReference>
<dbReference type="HOGENOM" id="CLU_009082_2_1_1"/>
<dbReference type="InParanoid" id="Q6CU65"/>
<dbReference type="Proteomes" id="UP000000598">
    <property type="component" value="Chromosome C"/>
</dbReference>
<dbReference type="GO" id="GO:0005737">
    <property type="term" value="C:cytoplasm"/>
    <property type="evidence" value="ECO:0007669"/>
    <property type="project" value="UniProtKB-SubCell"/>
</dbReference>
<dbReference type="GO" id="GO:0000974">
    <property type="term" value="C:Prp19 complex"/>
    <property type="evidence" value="ECO:0007669"/>
    <property type="project" value="InterPro"/>
</dbReference>
<dbReference type="GO" id="GO:0005681">
    <property type="term" value="C:spliceosomal complex"/>
    <property type="evidence" value="ECO:0007669"/>
    <property type="project" value="UniProtKB-KW"/>
</dbReference>
<dbReference type="GO" id="GO:0003677">
    <property type="term" value="F:DNA binding"/>
    <property type="evidence" value="ECO:0007669"/>
    <property type="project" value="UniProtKB-KW"/>
</dbReference>
<dbReference type="GO" id="GO:0000398">
    <property type="term" value="P:mRNA splicing, via spliceosome"/>
    <property type="evidence" value="ECO:0007669"/>
    <property type="project" value="InterPro"/>
</dbReference>
<dbReference type="CDD" id="cd00167">
    <property type="entry name" value="SANT"/>
    <property type="match status" value="1"/>
</dbReference>
<dbReference type="CDD" id="cd11659">
    <property type="entry name" value="SANT_CDC5_II"/>
    <property type="match status" value="1"/>
</dbReference>
<dbReference type="Gene3D" id="1.10.10.60">
    <property type="entry name" value="Homeodomain-like"/>
    <property type="match status" value="2"/>
</dbReference>
<dbReference type="InterPro" id="IPR047242">
    <property type="entry name" value="CDC5L/Cef1"/>
</dbReference>
<dbReference type="InterPro" id="IPR009057">
    <property type="entry name" value="Homeodomain-like_sf"/>
</dbReference>
<dbReference type="InterPro" id="IPR017930">
    <property type="entry name" value="Myb_dom"/>
</dbReference>
<dbReference type="InterPro" id="IPR001005">
    <property type="entry name" value="SANT/Myb"/>
</dbReference>
<dbReference type="InterPro" id="IPR047240">
    <property type="entry name" value="SANT_CDC5L_II"/>
</dbReference>
<dbReference type="PANTHER" id="PTHR45885">
    <property type="entry name" value="CELL DIVISION CYCLE 5-LIKE PROTEIN"/>
    <property type="match status" value="1"/>
</dbReference>
<dbReference type="PANTHER" id="PTHR45885:SF1">
    <property type="entry name" value="CELL DIVISION CYCLE 5-LIKE PROTEIN"/>
    <property type="match status" value="1"/>
</dbReference>
<dbReference type="Pfam" id="PF13921">
    <property type="entry name" value="Myb_DNA-bind_6"/>
    <property type="match status" value="1"/>
</dbReference>
<dbReference type="SMART" id="SM00717">
    <property type="entry name" value="SANT"/>
    <property type="match status" value="2"/>
</dbReference>
<dbReference type="SUPFAM" id="SSF46689">
    <property type="entry name" value="Homeodomain-like"/>
    <property type="match status" value="1"/>
</dbReference>
<dbReference type="PROSITE" id="PS51294">
    <property type="entry name" value="HTH_MYB"/>
    <property type="match status" value="1"/>
</dbReference>
<dbReference type="PROSITE" id="PS50090">
    <property type="entry name" value="MYB_LIKE"/>
    <property type="match status" value="1"/>
</dbReference>
<reference key="1">
    <citation type="journal article" date="2004" name="Nature">
        <title>Genome evolution in yeasts.</title>
        <authorList>
            <person name="Dujon B."/>
            <person name="Sherman D."/>
            <person name="Fischer G."/>
            <person name="Durrens P."/>
            <person name="Casaregola S."/>
            <person name="Lafontaine I."/>
            <person name="de Montigny J."/>
            <person name="Marck C."/>
            <person name="Neuveglise C."/>
            <person name="Talla E."/>
            <person name="Goffard N."/>
            <person name="Frangeul L."/>
            <person name="Aigle M."/>
            <person name="Anthouard V."/>
            <person name="Babour A."/>
            <person name="Barbe V."/>
            <person name="Barnay S."/>
            <person name="Blanchin S."/>
            <person name="Beckerich J.-M."/>
            <person name="Beyne E."/>
            <person name="Bleykasten C."/>
            <person name="Boisrame A."/>
            <person name="Boyer J."/>
            <person name="Cattolico L."/>
            <person name="Confanioleri F."/>
            <person name="de Daruvar A."/>
            <person name="Despons L."/>
            <person name="Fabre E."/>
            <person name="Fairhead C."/>
            <person name="Ferry-Dumazet H."/>
            <person name="Groppi A."/>
            <person name="Hantraye F."/>
            <person name="Hennequin C."/>
            <person name="Jauniaux N."/>
            <person name="Joyet P."/>
            <person name="Kachouri R."/>
            <person name="Kerrest A."/>
            <person name="Koszul R."/>
            <person name="Lemaire M."/>
            <person name="Lesur I."/>
            <person name="Ma L."/>
            <person name="Muller H."/>
            <person name="Nicaud J.-M."/>
            <person name="Nikolski M."/>
            <person name="Oztas S."/>
            <person name="Ozier-Kalogeropoulos O."/>
            <person name="Pellenz S."/>
            <person name="Potier S."/>
            <person name="Richard G.-F."/>
            <person name="Straub M.-L."/>
            <person name="Suleau A."/>
            <person name="Swennen D."/>
            <person name="Tekaia F."/>
            <person name="Wesolowski-Louvel M."/>
            <person name="Westhof E."/>
            <person name="Wirth B."/>
            <person name="Zeniou-Meyer M."/>
            <person name="Zivanovic Y."/>
            <person name="Bolotin-Fukuhara M."/>
            <person name="Thierry A."/>
            <person name="Bouchier C."/>
            <person name="Caudron B."/>
            <person name="Scarpelli C."/>
            <person name="Gaillardin C."/>
            <person name="Weissenbach J."/>
            <person name="Wincker P."/>
            <person name="Souciet J.-L."/>
        </authorList>
    </citation>
    <scope>NUCLEOTIDE SEQUENCE [LARGE SCALE GENOMIC DNA]</scope>
    <source>
        <strain>ATCC 8585 / CBS 2359 / DSM 70799 / NBRC 1267 / NRRL Y-1140 / WM37</strain>
    </source>
</reference>